<reference key="1">
    <citation type="journal article" date="2000" name="Nature">
        <title>Sequence and analysis of chromosome 3 of the plant Arabidopsis thaliana.</title>
        <authorList>
            <person name="Salanoubat M."/>
            <person name="Lemcke K."/>
            <person name="Rieger M."/>
            <person name="Ansorge W."/>
            <person name="Unseld M."/>
            <person name="Fartmann B."/>
            <person name="Valle G."/>
            <person name="Bloecker H."/>
            <person name="Perez-Alonso M."/>
            <person name="Obermaier B."/>
            <person name="Delseny M."/>
            <person name="Boutry M."/>
            <person name="Grivell L.A."/>
            <person name="Mache R."/>
            <person name="Puigdomenech P."/>
            <person name="De Simone V."/>
            <person name="Choisne N."/>
            <person name="Artiguenave F."/>
            <person name="Robert C."/>
            <person name="Brottier P."/>
            <person name="Wincker P."/>
            <person name="Cattolico L."/>
            <person name="Weissenbach J."/>
            <person name="Saurin W."/>
            <person name="Quetier F."/>
            <person name="Schaefer M."/>
            <person name="Mueller-Auer S."/>
            <person name="Gabel C."/>
            <person name="Fuchs M."/>
            <person name="Benes V."/>
            <person name="Wurmbach E."/>
            <person name="Drzonek H."/>
            <person name="Erfle H."/>
            <person name="Jordan N."/>
            <person name="Bangert S."/>
            <person name="Wiedelmann R."/>
            <person name="Kranz H."/>
            <person name="Voss H."/>
            <person name="Holland R."/>
            <person name="Brandt P."/>
            <person name="Nyakatura G."/>
            <person name="Vezzi A."/>
            <person name="D'Angelo M."/>
            <person name="Pallavicini A."/>
            <person name="Toppo S."/>
            <person name="Simionati B."/>
            <person name="Conrad A."/>
            <person name="Hornischer K."/>
            <person name="Kauer G."/>
            <person name="Loehnert T.-H."/>
            <person name="Nordsiek G."/>
            <person name="Reichelt J."/>
            <person name="Scharfe M."/>
            <person name="Schoen O."/>
            <person name="Bargues M."/>
            <person name="Terol J."/>
            <person name="Climent J."/>
            <person name="Navarro P."/>
            <person name="Collado C."/>
            <person name="Perez-Perez A."/>
            <person name="Ottenwaelder B."/>
            <person name="Duchemin D."/>
            <person name="Cooke R."/>
            <person name="Laudie M."/>
            <person name="Berger-Llauro C."/>
            <person name="Purnelle B."/>
            <person name="Masuy D."/>
            <person name="de Haan M."/>
            <person name="Maarse A.C."/>
            <person name="Alcaraz J.-P."/>
            <person name="Cottet A."/>
            <person name="Casacuberta E."/>
            <person name="Monfort A."/>
            <person name="Argiriou A."/>
            <person name="Flores M."/>
            <person name="Liguori R."/>
            <person name="Vitale D."/>
            <person name="Mannhaupt G."/>
            <person name="Haase D."/>
            <person name="Schoof H."/>
            <person name="Rudd S."/>
            <person name="Zaccaria P."/>
            <person name="Mewes H.-W."/>
            <person name="Mayer K.F.X."/>
            <person name="Kaul S."/>
            <person name="Town C.D."/>
            <person name="Koo H.L."/>
            <person name="Tallon L.J."/>
            <person name="Jenkins J."/>
            <person name="Rooney T."/>
            <person name="Rizzo M."/>
            <person name="Walts A."/>
            <person name="Utterback T."/>
            <person name="Fujii C.Y."/>
            <person name="Shea T.P."/>
            <person name="Creasy T.H."/>
            <person name="Haas B."/>
            <person name="Maiti R."/>
            <person name="Wu D."/>
            <person name="Peterson J."/>
            <person name="Van Aken S."/>
            <person name="Pai G."/>
            <person name="Militscher J."/>
            <person name="Sellers P."/>
            <person name="Gill J.E."/>
            <person name="Feldblyum T.V."/>
            <person name="Preuss D."/>
            <person name="Lin X."/>
            <person name="Nierman W.C."/>
            <person name="Salzberg S.L."/>
            <person name="White O."/>
            <person name="Venter J.C."/>
            <person name="Fraser C.M."/>
            <person name="Kaneko T."/>
            <person name="Nakamura Y."/>
            <person name="Sato S."/>
            <person name="Kato T."/>
            <person name="Asamizu E."/>
            <person name="Sasamoto S."/>
            <person name="Kimura T."/>
            <person name="Idesawa K."/>
            <person name="Kawashima K."/>
            <person name="Kishida Y."/>
            <person name="Kiyokawa C."/>
            <person name="Kohara M."/>
            <person name="Matsumoto M."/>
            <person name="Matsuno A."/>
            <person name="Muraki A."/>
            <person name="Nakayama S."/>
            <person name="Nakazaki N."/>
            <person name="Shinpo S."/>
            <person name="Takeuchi C."/>
            <person name="Wada T."/>
            <person name="Watanabe A."/>
            <person name="Yamada M."/>
            <person name="Yasuda M."/>
            <person name="Tabata S."/>
        </authorList>
    </citation>
    <scope>NUCLEOTIDE SEQUENCE [LARGE SCALE GENOMIC DNA]</scope>
    <source>
        <strain>cv. Columbia</strain>
    </source>
</reference>
<reference key="2">
    <citation type="journal article" date="2017" name="Plant J.">
        <title>Araport11: a complete reannotation of the Arabidopsis thaliana reference genome.</title>
        <authorList>
            <person name="Cheng C.Y."/>
            <person name="Krishnakumar V."/>
            <person name="Chan A.P."/>
            <person name="Thibaud-Nissen F."/>
            <person name="Schobel S."/>
            <person name="Town C.D."/>
        </authorList>
    </citation>
    <scope>GENOME REANNOTATION</scope>
    <source>
        <strain>cv. Columbia</strain>
    </source>
</reference>
<reference key="3">
    <citation type="journal article" date="2003" name="Science">
        <title>Empirical analysis of transcriptional activity in the Arabidopsis genome.</title>
        <authorList>
            <person name="Yamada K."/>
            <person name="Lim J."/>
            <person name="Dale J.M."/>
            <person name="Chen H."/>
            <person name="Shinn P."/>
            <person name="Palm C.J."/>
            <person name="Southwick A.M."/>
            <person name="Wu H.C."/>
            <person name="Kim C.J."/>
            <person name="Nguyen M."/>
            <person name="Pham P.K."/>
            <person name="Cheuk R.F."/>
            <person name="Karlin-Newmann G."/>
            <person name="Liu S.X."/>
            <person name="Lam B."/>
            <person name="Sakano H."/>
            <person name="Wu T."/>
            <person name="Yu G."/>
            <person name="Miranda M."/>
            <person name="Quach H.L."/>
            <person name="Tripp M."/>
            <person name="Chang C.H."/>
            <person name="Lee J.M."/>
            <person name="Toriumi M.J."/>
            <person name="Chan M.M."/>
            <person name="Tang C.C."/>
            <person name="Onodera C.S."/>
            <person name="Deng J.M."/>
            <person name="Akiyama K."/>
            <person name="Ansari Y."/>
            <person name="Arakawa T."/>
            <person name="Banh J."/>
            <person name="Banno F."/>
            <person name="Bowser L."/>
            <person name="Brooks S.Y."/>
            <person name="Carninci P."/>
            <person name="Chao Q."/>
            <person name="Choy N."/>
            <person name="Enju A."/>
            <person name="Goldsmith A.D."/>
            <person name="Gurjal M."/>
            <person name="Hansen N.F."/>
            <person name="Hayashizaki Y."/>
            <person name="Johnson-Hopson C."/>
            <person name="Hsuan V.W."/>
            <person name="Iida K."/>
            <person name="Karnes M."/>
            <person name="Khan S."/>
            <person name="Koesema E."/>
            <person name="Ishida J."/>
            <person name="Jiang P.X."/>
            <person name="Jones T."/>
            <person name="Kawai J."/>
            <person name="Kamiya A."/>
            <person name="Meyers C."/>
            <person name="Nakajima M."/>
            <person name="Narusaka M."/>
            <person name="Seki M."/>
            <person name="Sakurai T."/>
            <person name="Satou M."/>
            <person name="Tamse R."/>
            <person name="Vaysberg M."/>
            <person name="Wallender E.K."/>
            <person name="Wong C."/>
            <person name="Yamamura Y."/>
            <person name="Yuan S."/>
            <person name="Shinozaki K."/>
            <person name="Davis R.W."/>
            <person name="Theologis A."/>
            <person name="Ecker J.R."/>
        </authorList>
    </citation>
    <scope>NUCLEOTIDE SEQUENCE [LARGE SCALE MRNA]</scope>
    <source>
        <strain>cv. Columbia</strain>
    </source>
</reference>
<reference key="4">
    <citation type="journal article" date="2009" name="Plant Physiol.">
        <title>Large-scale Arabidopsis phosphoproteome profiling reveals novel chloroplast kinase substrates and phosphorylation networks.</title>
        <authorList>
            <person name="Reiland S."/>
            <person name="Messerli G."/>
            <person name="Baerenfaller K."/>
            <person name="Gerrits B."/>
            <person name="Endler A."/>
            <person name="Grossmann J."/>
            <person name="Gruissem W."/>
            <person name="Baginsky S."/>
        </authorList>
    </citation>
    <scope>PHOSPHORYLATION [LARGE SCALE ANALYSIS] AT THR-526</scope>
    <scope>IDENTIFICATION BY MASS SPECTROMETRY [LARGE SCALE ANALYSIS]</scope>
</reference>
<reference key="5">
    <citation type="journal article" date="2013" name="Plant Cell">
        <title>MAIGO5 functions in protein export from Golgi-associated endoplasmic reticulum exit sites in Arabidopsis.</title>
        <authorList>
            <person name="Takagi J."/>
            <person name="Renna L."/>
            <person name="Takahashi H."/>
            <person name="Koumoto Y."/>
            <person name="Tamura K."/>
            <person name="Stefano G."/>
            <person name="Fukao Y."/>
            <person name="Kondo M."/>
            <person name="Nishimura M."/>
            <person name="Shimada T."/>
            <person name="Brandizzi F."/>
            <person name="Hara-Nishimura I."/>
        </authorList>
    </citation>
    <scope>INTERACTION WITH SEC13A AND SEC13B</scope>
</reference>
<sequence>MACIKGVGRSASVALAPDAPYMAAGTMAGAVDLSFSSSANLEIFKLDFQSDDRDLPLVGEIPSSERFNRLAWGRNGSGSEEFALGLIAGGLVDGNIDLWNPLSLIGSQPSENALVGHLSVHKGPVRGLEFNAISSNLLASGADDGEICIWDLLKPSEPSHFPLLKGSGSATQGEISFISWNRKVQQILASTSYNGTTVIWDLRKQKPIINFADSVRRRCSVLQWNPNVTTQIMVASDDDSSPTLKLWDMRNIMSPVREFTGHQRGVIAMEWCPSDSSYLLTCAKDNRTICWDTNTAEIVAELPAGNNWNFDVHWYPKIPGVISASSFDGKIGIYNIEGCSRYGVEENNFGTAPLKAPKWYKRPVGASFGFGGKLVSCHARAPAKGTSSILSEVFLHSLVTEQSLVSRTSEFEAAIENGDMTSLRGLCEKKSEETESEEEKETWGLLKIMFEEEGTSRTKLISHLGFTLPVAEKDQAVDGLSSDLNGIRLEDTAADALDLDDSNEAAAFAMDNGEDFFNNFPAKPDTPVSTSAKDFMPSDTDFSTKGEETQEMQEEEEESSDPVFDNAIQRALIVGDYKEAVDQCITANKMADALVIAHVGGTALWESTREKYLKTSSAPYMKVVSAMVNNDLRSLIYTRSHKFWKETLALLCTFAQGEQWTTLCDALASKLMAAGNTLAAVLCYICAGNVDRTVEIWSRSLANERDGRSYAELLQDLMEKTLVLALATGNKKFSASLCKLFESYAEILASQGLLTTAMKYLKVLDSGGLSPELSILRDRISLSAEPETNTTASGNTQPQSTMPYNQEPTQAQPNVLANPYDNQYQQPYTDSYYVPQVSHPPMQQPTMFMPHQAQPAPQPSFTPAPTSNAQPSMRTTFVPSTPPALKNADQYQQPTMSSHSFTGPSNNAYPVPPGPGQYAPSGPSQLGQYPNPKMPQVVAPAAGPIGFTPMATPGVAPRSVQPASPPTQQAAAQAAPAPATPPPTVQTADTSNVPAHQKPVIATLTRLFNETSEALGGARANTTKKREIEDNSRKLGALFVKLNSGDISKNAADKLAQLCQALDNNDFSTALQIQVLLTTSEWDECNFWLATLKRMMVKARQNVR</sequence>
<proteinExistence type="evidence at protein level"/>
<dbReference type="EMBL" id="AL163818">
    <property type="protein sequence ID" value="CAB87799.1"/>
    <property type="status" value="ALT_SEQ"/>
    <property type="molecule type" value="Genomic_DNA"/>
</dbReference>
<dbReference type="EMBL" id="CP002686">
    <property type="protein sequence ID" value="AEE80486.1"/>
    <property type="molecule type" value="Genomic_DNA"/>
</dbReference>
<dbReference type="EMBL" id="AY099702">
    <property type="protein sequence ID" value="AAM20553.1"/>
    <property type="molecule type" value="mRNA"/>
</dbReference>
<dbReference type="EMBL" id="BT008435">
    <property type="protein sequence ID" value="AAP37794.1"/>
    <property type="molecule type" value="mRNA"/>
</dbReference>
<dbReference type="PIR" id="T49187">
    <property type="entry name" value="T49187"/>
</dbReference>
<dbReference type="RefSeq" id="NP_851024.1">
    <molecule id="Q8L611-1"/>
    <property type="nucleotide sequence ID" value="NM_180693.2"/>
</dbReference>
<dbReference type="SMR" id="Q8L611"/>
<dbReference type="BioGRID" id="10835">
    <property type="interactions" value="11"/>
</dbReference>
<dbReference type="FunCoup" id="Q8L611">
    <property type="interactions" value="4295"/>
</dbReference>
<dbReference type="IntAct" id="Q8L611">
    <property type="interactions" value="2"/>
</dbReference>
<dbReference type="STRING" id="3702.Q8L611"/>
<dbReference type="GlyGen" id="Q8L611">
    <property type="glycosylation" value="3 sites"/>
</dbReference>
<dbReference type="iPTMnet" id="Q8L611"/>
<dbReference type="MetOSite" id="Q8L611"/>
<dbReference type="PaxDb" id="3702-AT3G63460.1"/>
<dbReference type="ProMEX" id="Q8L611"/>
<dbReference type="ProteomicsDB" id="226671">
    <molecule id="Q8L611-1"/>
</dbReference>
<dbReference type="EnsemblPlants" id="AT3G63460.1">
    <molecule id="Q8L611-1"/>
    <property type="protein sequence ID" value="AT3G63460.1"/>
    <property type="gene ID" value="AT3G63460"/>
</dbReference>
<dbReference type="GeneID" id="825521"/>
<dbReference type="Gramene" id="AT3G63460.1">
    <molecule id="Q8L611-1"/>
    <property type="protein sequence ID" value="AT3G63460.1"/>
    <property type="gene ID" value="AT3G63460"/>
</dbReference>
<dbReference type="KEGG" id="ath:AT3G63460"/>
<dbReference type="Araport" id="AT3G63460"/>
<dbReference type="TAIR" id="AT3G63460">
    <property type="gene designation" value="SEC31B"/>
</dbReference>
<dbReference type="eggNOG" id="KOG0307">
    <property type="taxonomic scope" value="Eukaryota"/>
</dbReference>
<dbReference type="InParanoid" id="Q8L611"/>
<dbReference type="PhylomeDB" id="Q8L611"/>
<dbReference type="CD-CODE" id="4299E36E">
    <property type="entry name" value="Nucleolus"/>
</dbReference>
<dbReference type="PRO" id="PR:Q8L611"/>
<dbReference type="Proteomes" id="UP000006548">
    <property type="component" value="Chromosome 3"/>
</dbReference>
<dbReference type="ExpressionAtlas" id="Q8L611">
    <property type="expression patterns" value="baseline and differential"/>
</dbReference>
<dbReference type="GO" id="GO:0005829">
    <property type="term" value="C:cytosol"/>
    <property type="evidence" value="ECO:0007005"/>
    <property type="project" value="TAIR"/>
</dbReference>
<dbReference type="GO" id="GO:0005783">
    <property type="term" value="C:endoplasmic reticulum"/>
    <property type="evidence" value="ECO:0007669"/>
    <property type="project" value="UniProtKB-SubCell"/>
</dbReference>
<dbReference type="GO" id="GO:0005794">
    <property type="term" value="C:Golgi apparatus"/>
    <property type="evidence" value="ECO:0007669"/>
    <property type="project" value="UniProtKB-SubCell"/>
</dbReference>
<dbReference type="GO" id="GO:0009506">
    <property type="term" value="C:plasmodesma"/>
    <property type="evidence" value="ECO:0007005"/>
    <property type="project" value="TAIR"/>
</dbReference>
<dbReference type="GO" id="GO:0006888">
    <property type="term" value="P:endoplasmic reticulum to Golgi vesicle-mediated transport"/>
    <property type="evidence" value="ECO:0007669"/>
    <property type="project" value="InterPro"/>
</dbReference>
<dbReference type="GO" id="GO:0015031">
    <property type="term" value="P:protein transport"/>
    <property type="evidence" value="ECO:0007669"/>
    <property type="project" value="UniProtKB-KW"/>
</dbReference>
<dbReference type="FunFam" id="1.20.940.10:FF:000003">
    <property type="entry name" value="Protein transport protein SEC31 homolog B"/>
    <property type="match status" value="1"/>
</dbReference>
<dbReference type="FunFam" id="1.25.40.1030:FF:000004">
    <property type="entry name" value="Protein transport protein SEC31 homolog B"/>
    <property type="match status" value="1"/>
</dbReference>
<dbReference type="FunFam" id="2.130.10.10:FF:000295">
    <property type="entry name" value="Protein transport protein SEC31 homolog B"/>
    <property type="match status" value="1"/>
</dbReference>
<dbReference type="Gene3D" id="1.25.40.1030">
    <property type="match status" value="1"/>
</dbReference>
<dbReference type="Gene3D" id="1.20.940.10">
    <property type="entry name" value="Functional domain of the splicing factor Prp18"/>
    <property type="match status" value="1"/>
</dbReference>
<dbReference type="Gene3D" id="2.130.10.10">
    <property type="entry name" value="YVTN repeat-like/Quinoprotein amine dehydrogenase"/>
    <property type="match status" value="1"/>
</dbReference>
<dbReference type="InterPro" id="IPR024298">
    <property type="entry name" value="Sec16_Sec23-bd"/>
</dbReference>
<dbReference type="InterPro" id="IPR040251">
    <property type="entry name" value="SEC31-like"/>
</dbReference>
<dbReference type="InterPro" id="IPR015943">
    <property type="entry name" value="WD40/YVTN_repeat-like_dom_sf"/>
</dbReference>
<dbReference type="InterPro" id="IPR019775">
    <property type="entry name" value="WD40_repeat_CS"/>
</dbReference>
<dbReference type="InterPro" id="IPR036322">
    <property type="entry name" value="WD40_repeat_dom_sf"/>
</dbReference>
<dbReference type="InterPro" id="IPR001680">
    <property type="entry name" value="WD40_rpt"/>
</dbReference>
<dbReference type="PANTHER" id="PTHR13923">
    <property type="entry name" value="SEC31-RELATED PROTEIN"/>
    <property type="match status" value="1"/>
</dbReference>
<dbReference type="PANTHER" id="PTHR13923:SF11">
    <property type="entry name" value="SECRETORY 31, ISOFORM D"/>
    <property type="match status" value="1"/>
</dbReference>
<dbReference type="Pfam" id="PF12931">
    <property type="entry name" value="TPR_Sec16"/>
    <property type="match status" value="1"/>
</dbReference>
<dbReference type="Pfam" id="PF00400">
    <property type="entry name" value="WD40"/>
    <property type="match status" value="2"/>
</dbReference>
<dbReference type="SMART" id="SM00320">
    <property type="entry name" value="WD40"/>
    <property type="match status" value="6"/>
</dbReference>
<dbReference type="SUPFAM" id="SSF50978">
    <property type="entry name" value="WD40 repeat-like"/>
    <property type="match status" value="1"/>
</dbReference>
<dbReference type="PROSITE" id="PS00678">
    <property type="entry name" value="WD_REPEATS_1"/>
    <property type="match status" value="2"/>
</dbReference>
<dbReference type="PROSITE" id="PS50082">
    <property type="entry name" value="WD_REPEATS_2"/>
    <property type="match status" value="2"/>
</dbReference>
<dbReference type="PROSITE" id="PS50294">
    <property type="entry name" value="WD_REPEATS_REGION"/>
    <property type="match status" value="1"/>
</dbReference>
<evidence type="ECO:0000255" key="1"/>
<evidence type="ECO:0000256" key="2">
    <source>
        <dbReference type="SAM" id="MobiDB-lite"/>
    </source>
</evidence>
<evidence type="ECO:0000269" key="3">
    <source>
    </source>
</evidence>
<evidence type="ECO:0000303" key="4">
    <source>
    </source>
</evidence>
<evidence type="ECO:0000305" key="5"/>
<evidence type="ECO:0000305" key="6">
    <source>
    </source>
</evidence>
<evidence type="ECO:0000312" key="7">
    <source>
        <dbReference type="Araport" id="AT3G63460"/>
    </source>
</evidence>
<evidence type="ECO:0000312" key="8">
    <source>
        <dbReference type="EMBL" id="AAM20553.1"/>
    </source>
</evidence>
<evidence type="ECO:0000312" key="9">
    <source>
        <dbReference type="EMBL" id="CAB87799.1"/>
    </source>
</evidence>
<evidence type="ECO:0007744" key="10">
    <source>
    </source>
</evidence>
<keyword id="KW-0025">Alternative splicing</keyword>
<keyword id="KW-0256">Endoplasmic reticulum</keyword>
<keyword id="KW-0931">ER-Golgi transport</keyword>
<keyword id="KW-0333">Golgi apparatus</keyword>
<keyword id="KW-0597">Phosphoprotein</keyword>
<keyword id="KW-0653">Protein transport</keyword>
<keyword id="KW-1185">Reference proteome</keyword>
<keyword id="KW-0677">Repeat</keyword>
<keyword id="KW-0813">Transport</keyword>
<keyword id="KW-0853">WD repeat</keyword>
<name>SC31B_ARATH</name>
<protein>
    <recommendedName>
        <fullName evidence="5">Protein transport protein SEC31 homolog B</fullName>
    </recommendedName>
    <alternativeName>
        <fullName evidence="5">SEC31-like protein B</fullName>
    </alternativeName>
</protein>
<feature type="chain" id="PRO_0000430541" description="Protein transport protein SEC31 homolog B">
    <location>
        <begin position="1"/>
        <end position="1104"/>
    </location>
</feature>
<feature type="repeat" description="WD 1" evidence="1">
    <location>
        <begin position="5"/>
        <end position="45"/>
    </location>
</feature>
<feature type="repeat" description="WD 2" evidence="1">
    <location>
        <begin position="62"/>
        <end position="109"/>
    </location>
</feature>
<feature type="repeat" description="WD 3" evidence="1">
    <location>
        <begin position="120"/>
        <end position="160"/>
    </location>
</feature>
<feature type="repeat" description="WD 4" evidence="1">
    <location>
        <begin position="170"/>
        <end position="210"/>
    </location>
</feature>
<feature type="repeat" description="WD 5" evidence="1">
    <location>
        <begin position="214"/>
        <end position="257"/>
    </location>
</feature>
<feature type="repeat" description="WD 6" evidence="1">
    <location>
        <begin position="261"/>
        <end position="301"/>
    </location>
</feature>
<feature type="repeat" description="WD 7" evidence="1">
    <location>
        <begin position="304"/>
        <end position="344"/>
    </location>
</feature>
<feature type="repeat" description="WD 8" evidence="1">
    <location>
        <begin position="662"/>
        <end position="707"/>
    </location>
</feature>
<feature type="region of interest" description="Disordered" evidence="2">
    <location>
        <begin position="527"/>
        <end position="562"/>
    </location>
</feature>
<feature type="region of interest" description="Disordered" evidence="2">
    <location>
        <begin position="782"/>
        <end position="811"/>
    </location>
</feature>
<feature type="region of interest" description="Disordered" evidence="2">
    <location>
        <begin position="851"/>
        <end position="874"/>
    </location>
</feature>
<feature type="region of interest" description="Disordered" evidence="2">
    <location>
        <begin position="892"/>
        <end position="931"/>
    </location>
</feature>
<feature type="region of interest" description="Disordered" evidence="2">
    <location>
        <begin position="952"/>
        <end position="994"/>
    </location>
</feature>
<feature type="compositionally biased region" description="Acidic residues" evidence="2">
    <location>
        <begin position="549"/>
        <end position="560"/>
    </location>
</feature>
<feature type="compositionally biased region" description="Polar residues" evidence="2">
    <location>
        <begin position="786"/>
        <end position="811"/>
    </location>
</feature>
<feature type="compositionally biased region" description="Polar residues" evidence="2">
    <location>
        <begin position="863"/>
        <end position="874"/>
    </location>
</feature>
<feature type="compositionally biased region" description="Polar residues" evidence="2">
    <location>
        <begin position="892"/>
        <end position="908"/>
    </location>
</feature>
<feature type="compositionally biased region" description="Low complexity" evidence="2">
    <location>
        <begin position="959"/>
        <end position="977"/>
    </location>
</feature>
<feature type="modified residue" description="Phosphothreonine" evidence="10">
    <location>
        <position position="526"/>
    </location>
</feature>
<gene>
    <name evidence="4" type="primary">SEC31B</name>
    <name evidence="7" type="ordered locus">At3g63460</name>
    <name evidence="9" type="ORF">MAA21.90</name>
</gene>
<accession>Q8L611</accession>
<accession>Q9LY69</accession>
<organism evidence="8">
    <name type="scientific">Arabidopsis thaliana</name>
    <name type="common">Mouse-ear cress</name>
    <dbReference type="NCBI Taxonomy" id="3702"/>
    <lineage>
        <taxon>Eukaryota</taxon>
        <taxon>Viridiplantae</taxon>
        <taxon>Streptophyta</taxon>
        <taxon>Embryophyta</taxon>
        <taxon>Tracheophyta</taxon>
        <taxon>Spermatophyta</taxon>
        <taxon>Magnoliopsida</taxon>
        <taxon>eudicotyledons</taxon>
        <taxon>Gunneridae</taxon>
        <taxon>Pentapetalae</taxon>
        <taxon>rosids</taxon>
        <taxon>malvids</taxon>
        <taxon>Brassicales</taxon>
        <taxon>Brassicaceae</taxon>
        <taxon>Camelineae</taxon>
        <taxon>Arabidopsis</taxon>
    </lineage>
</organism>
<comment type="function">
    <text evidence="6">Required for protein transport from the endoplasmic reticulum to the Golgi apparatus.</text>
</comment>
<comment type="subunit">
    <text evidence="3">Interacts with SEC13A and SEC13B.</text>
</comment>
<comment type="subcellular location">
    <subcellularLocation>
        <location evidence="6">Golgi apparatus</location>
    </subcellularLocation>
    <subcellularLocation>
        <location evidence="6">Endoplasmic reticulum</location>
    </subcellularLocation>
</comment>
<comment type="alternative products">
    <event type="alternative splicing"/>
    <isoform>
        <id>Q8L611-1</id>
        <name>1</name>
        <sequence type="displayed"/>
    </isoform>
    <text>A number of isoforms are produced. According to EST sequences.</text>
</comment>
<comment type="similarity">
    <text evidence="5">Belongs to the WD repeat SEC31 family.</text>
</comment>
<comment type="sequence caution" evidence="5">
    <conflict type="erroneous gene model prediction">
        <sequence resource="EMBL-CDS" id="CAB87799"/>
    </conflict>
</comment>